<reference key="1">
    <citation type="journal article" date="2006" name="Proc. Natl. Acad. Sci. U.S.A.">
        <title>Comparative genomics of the lactic acid bacteria.</title>
        <authorList>
            <person name="Makarova K.S."/>
            <person name="Slesarev A."/>
            <person name="Wolf Y.I."/>
            <person name="Sorokin A."/>
            <person name="Mirkin B."/>
            <person name="Koonin E.V."/>
            <person name="Pavlov A."/>
            <person name="Pavlova N."/>
            <person name="Karamychev V."/>
            <person name="Polouchine N."/>
            <person name="Shakhova V."/>
            <person name="Grigoriev I."/>
            <person name="Lou Y."/>
            <person name="Rohksar D."/>
            <person name="Lucas S."/>
            <person name="Huang K."/>
            <person name="Goodstein D.M."/>
            <person name="Hawkins T."/>
            <person name="Plengvidhya V."/>
            <person name="Welker D."/>
            <person name="Hughes J."/>
            <person name="Goh Y."/>
            <person name="Benson A."/>
            <person name="Baldwin K."/>
            <person name="Lee J.-H."/>
            <person name="Diaz-Muniz I."/>
            <person name="Dosti B."/>
            <person name="Smeianov V."/>
            <person name="Wechter W."/>
            <person name="Barabote R."/>
            <person name="Lorca G."/>
            <person name="Altermann E."/>
            <person name="Barrangou R."/>
            <person name="Ganesan B."/>
            <person name="Xie Y."/>
            <person name="Rawsthorne H."/>
            <person name="Tamir D."/>
            <person name="Parker C."/>
            <person name="Breidt F."/>
            <person name="Broadbent J.R."/>
            <person name="Hutkins R."/>
            <person name="O'Sullivan D."/>
            <person name="Steele J."/>
            <person name="Unlu G."/>
            <person name="Saier M.H. Jr."/>
            <person name="Klaenhammer T."/>
            <person name="Richardson P."/>
            <person name="Kozyavkin S."/>
            <person name="Weimer B.C."/>
            <person name="Mills D.A."/>
        </authorList>
    </citation>
    <scope>NUCLEOTIDE SEQUENCE [LARGE SCALE GENOMIC DNA]</scope>
    <source>
        <strain>ATCC 25745 / CCUG 21536 / LMG 10740 / 183-1w</strain>
    </source>
</reference>
<evidence type="ECO:0000255" key="1">
    <source>
        <dbReference type="HAMAP-Rule" id="MF_01333"/>
    </source>
</evidence>
<evidence type="ECO:0000305" key="2"/>
<proteinExistence type="inferred from homology"/>
<keyword id="KW-0687">Ribonucleoprotein</keyword>
<keyword id="KW-0689">Ribosomal protein</keyword>
<keyword id="KW-0694">RNA-binding</keyword>
<keyword id="KW-0699">rRNA-binding</keyword>
<keyword id="KW-0820">tRNA-binding</keyword>
<accession>Q03EC8</accession>
<protein>
    <recommendedName>
        <fullName evidence="1">Large ribosomal subunit protein uL5</fullName>
    </recommendedName>
    <alternativeName>
        <fullName evidence="2">50S ribosomal protein L5</fullName>
    </alternativeName>
</protein>
<sequence length="180" mass="20229">MANRLKEKFVNEITPDLVKKFDYTSVMQVPKIEKIVLNMGVGDAVTNSKNLDEAVAELELISGQKPLVTKAKKSIAGFRLREGMSIGAKVTLRGERMYDFLDKLVNVSLPRVRDFRGVSSKAFDGRGNYTLGVREQLIFPEIDFDNVNRVRGLDIVIVTTANTDEESRELLAQFGMPFEK</sequence>
<dbReference type="EMBL" id="CP000422">
    <property type="protein sequence ID" value="ABJ68444.1"/>
    <property type="molecule type" value="Genomic_DNA"/>
</dbReference>
<dbReference type="RefSeq" id="WP_002833339.1">
    <property type="nucleotide sequence ID" value="NC_008525.1"/>
</dbReference>
<dbReference type="SMR" id="Q03EC8"/>
<dbReference type="STRING" id="278197.PEPE_1406"/>
<dbReference type="GeneID" id="33061262"/>
<dbReference type="KEGG" id="ppe:PEPE_1406"/>
<dbReference type="eggNOG" id="COG0094">
    <property type="taxonomic scope" value="Bacteria"/>
</dbReference>
<dbReference type="HOGENOM" id="CLU_061015_2_1_9"/>
<dbReference type="OrthoDB" id="9806626at2"/>
<dbReference type="Proteomes" id="UP000000773">
    <property type="component" value="Chromosome"/>
</dbReference>
<dbReference type="GO" id="GO:1990904">
    <property type="term" value="C:ribonucleoprotein complex"/>
    <property type="evidence" value="ECO:0007669"/>
    <property type="project" value="UniProtKB-KW"/>
</dbReference>
<dbReference type="GO" id="GO:0005840">
    <property type="term" value="C:ribosome"/>
    <property type="evidence" value="ECO:0007669"/>
    <property type="project" value="UniProtKB-KW"/>
</dbReference>
<dbReference type="GO" id="GO:0019843">
    <property type="term" value="F:rRNA binding"/>
    <property type="evidence" value="ECO:0007669"/>
    <property type="project" value="UniProtKB-UniRule"/>
</dbReference>
<dbReference type="GO" id="GO:0003735">
    <property type="term" value="F:structural constituent of ribosome"/>
    <property type="evidence" value="ECO:0007669"/>
    <property type="project" value="InterPro"/>
</dbReference>
<dbReference type="GO" id="GO:0000049">
    <property type="term" value="F:tRNA binding"/>
    <property type="evidence" value="ECO:0007669"/>
    <property type="project" value="UniProtKB-UniRule"/>
</dbReference>
<dbReference type="GO" id="GO:0006412">
    <property type="term" value="P:translation"/>
    <property type="evidence" value="ECO:0007669"/>
    <property type="project" value="UniProtKB-UniRule"/>
</dbReference>
<dbReference type="FunFam" id="3.30.1440.10:FF:000001">
    <property type="entry name" value="50S ribosomal protein L5"/>
    <property type="match status" value="1"/>
</dbReference>
<dbReference type="Gene3D" id="3.30.1440.10">
    <property type="match status" value="1"/>
</dbReference>
<dbReference type="HAMAP" id="MF_01333_B">
    <property type="entry name" value="Ribosomal_uL5_B"/>
    <property type="match status" value="1"/>
</dbReference>
<dbReference type="InterPro" id="IPR002132">
    <property type="entry name" value="Ribosomal_uL5"/>
</dbReference>
<dbReference type="InterPro" id="IPR020930">
    <property type="entry name" value="Ribosomal_uL5_bac-type"/>
</dbReference>
<dbReference type="InterPro" id="IPR031309">
    <property type="entry name" value="Ribosomal_uL5_C"/>
</dbReference>
<dbReference type="InterPro" id="IPR020929">
    <property type="entry name" value="Ribosomal_uL5_CS"/>
</dbReference>
<dbReference type="InterPro" id="IPR022803">
    <property type="entry name" value="Ribosomal_uL5_dom_sf"/>
</dbReference>
<dbReference type="InterPro" id="IPR031310">
    <property type="entry name" value="Ribosomal_uL5_N"/>
</dbReference>
<dbReference type="NCBIfam" id="NF000585">
    <property type="entry name" value="PRK00010.1"/>
    <property type="match status" value="1"/>
</dbReference>
<dbReference type="PANTHER" id="PTHR11994">
    <property type="entry name" value="60S RIBOSOMAL PROTEIN L11-RELATED"/>
    <property type="match status" value="1"/>
</dbReference>
<dbReference type="Pfam" id="PF00281">
    <property type="entry name" value="Ribosomal_L5"/>
    <property type="match status" value="1"/>
</dbReference>
<dbReference type="Pfam" id="PF00673">
    <property type="entry name" value="Ribosomal_L5_C"/>
    <property type="match status" value="1"/>
</dbReference>
<dbReference type="PIRSF" id="PIRSF002161">
    <property type="entry name" value="Ribosomal_L5"/>
    <property type="match status" value="1"/>
</dbReference>
<dbReference type="SUPFAM" id="SSF55282">
    <property type="entry name" value="RL5-like"/>
    <property type="match status" value="1"/>
</dbReference>
<dbReference type="PROSITE" id="PS00358">
    <property type="entry name" value="RIBOSOMAL_L5"/>
    <property type="match status" value="1"/>
</dbReference>
<gene>
    <name evidence="1" type="primary">rplE</name>
    <name type="ordered locus">PEPE_1406</name>
</gene>
<name>RL5_PEDPA</name>
<feature type="chain" id="PRO_1000052789" description="Large ribosomal subunit protein uL5">
    <location>
        <begin position="1"/>
        <end position="180"/>
    </location>
</feature>
<comment type="function">
    <text evidence="1">This is one of the proteins that bind and probably mediate the attachment of the 5S RNA into the large ribosomal subunit, where it forms part of the central protuberance. In the 70S ribosome it contacts protein S13 of the 30S subunit (bridge B1b), connecting the 2 subunits; this bridge is implicated in subunit movement. Contacts the P site tRNA; the 5S rRNA and some of its associated proteins might help stabilize positioning of ribosome-bound tRNAs.</text>
</comment>
<comment type="subunit">
    <text evidence="1">Part of the 50S ribosomal subunit; part of the 5S rRNA/L5/L18/L25 subcomplex. Contacts the 5S rRNA and the P site tRNA. Forms a bridge to the 30S subunit in the 70S ribosome.</text>
</comment>
<comment type="similarity">
    <text evidence="1">Belongs to the universal ribosomal protein uL5 family.</text>
</comment>
<organism>
    <name type="scientific">Pediococcus pentosaceus (strain ATCC 25745 / CCUG 21536 / LMG 10740 / 183-1w)</name>
    <dbReference type="NCBI Taxonomy" id="278197"/>
    <lineage>
        <taxon>Bacteria</taxon>
        <taxon>Bacillati</taxon>
        <taxon>Bacillota</taxon>
        <taxon>Bacilli</taxon>
        <taxon>Lactobacillales</taxon>
        <taxon>Lactobacillaceae</taxon>
        <taxon>Pediococcus</taxon>
    </lineage>
</organism>